<gene>
    <name evidence="1" type="primary">pepA</name>
    <name type="ordered locus">BLi03387</name>
    <name type="ordered locus">BL05323</name>
</gene>
<proteinExistence type="inferred from homology"/>
<evidence type="ECO:0000255" key="1">
    <source>
        <dbReference type="HAMAP-Rule" id="MF_00181"/>
    </source>
</evidence>
<protein>
    <recommendedName>
        <fullName evidence="1">Probable cytosol aminopeptidase</fullName>
        <ecNumber evidence="1">3.4.11.1</ecNumber>
    </recommendedName>
    <alternativeName>
        <fullName evidence="1">Leucine aminopeptidase</fullName>
        <shortName evidence="1">LAP</shortName>
        <ecNumber evidence="1">3.4.11.10</ecNumber>
    </alternativeName>
    <alternativeName>
        <fullName evidence="1">Leucyl aminopeptidase</fullName>
    </alternativeName>
</protein>
<reference key="1">
    <citation type="journal article" date="2004" name="J. Mol. Microbiol. Biotechnol.">
        <title>The complete genome sequence of Bacillus licheniformis DSM13, an organism with great industrial potential.</title>
        <authorList>
            <person name="Veith B."/>
            <person name="Herzberg C."/>
            <person name="Steckel S."/>
            <person name="Feesche J."/>
            <person name="Maurer K.H."/>
            <person name="Ehrenreich P."/>
            <person name="Baeumer S."/>
            <person name="Henne A."/>
            <person name="Liesegang H."/>
            <person name="Merkl R."/>
            <person name="Ehrenreich A."/>
            <person name="Gottschalk G."/>
        </authorList>
    </citation>
    <scope>NUCLEOTIDE SEQUENCE [LARGE SCALE GENOMIC DNA]</scope>
    <source>
        <strain>ATCC 14580 / DSM 13 / JCM 2505 / CCUG 7422 / NBRC 12200 / NCIMB 9375 / NCTC 10341 / NRRL NRS-1264 / Gibson 46</strain>
    </source>
</reference>
<reference key="2">
    <citation type="journal article" date="2004" name="Genome Biol.">
        <title>Complete genome sequence of the industrial bacterium Bacillus licheniformis and comparisons with closely related Bacillus species.</title>
        <authorList>
            <person name="Rey M.W."/>
            <person name="Ramaiya P."/>
            <person name="Nelson B.A."/>
            <person name="Brody-Karpin S.D."/>
            <person name="Zaretsky E.J."/>
            <person name="Tang M."/>
            <person name="Lopez de Leon A."/>
            <person name="Xiang H."/>
            <person name="Gusti V."/>
            <person name="Clausen I.G."/>
            <person name="Olsen P.B."/>
            <person name="Rasmussen M.D."/>
            <person name="Andersen J.T."/>
            <person name="Joergensen P.L."/>
            <person name="Larsen T.S."/>
            <person name="Sorokin A."/>
            <person name="Bolotin A."/>
            <person name="Lapidus A."/>
            <person name="Galleron N."/>
            <person name="Ehrlich S.D."/>
            <person name="Berka R.M."/>
        </authorList>
    </citation>
    <scope>NUCLEOTIDE SEQUENCE [LARGE SCALE GENOMIC DNA]</scope>
    <source>
        <strain>ATCC 14580 / DSM 13 / JCM 2505 / CCUG 7422 / NBRC 12200 / NCIMB 9375 / NCTC 10341 / NRRL NRS-1264 / Gibson 46</strain>
    </source>
</reference>
<sequence length="496" mass="53577">MFYAFKDFEKKETLLIGLFKKSRLYGKAEEIDRLLNGQLSQLLKDGDVSSKKAKVSKIFTPSLQGVKRIYIVGLGREAEFTFEDAKQCFAEAVQLIHKDRKQELTVMLDSFVSEEVPAADAAHALAESCMLSCYEVQDYKHRSNVPDQCLQSVYVLTDHDLKEIQASLHVGQVYGNATNSARTLVNMPGNMLTAADLASYAAELAAKYEFECEILEKAEMEELGMGGLLAVNQGSEEPPKMIVLKYQGKETWDDVIGLVGKGITFDTGGYSIKTKSGIVGMKSDMGGAASVLGAMEAIGELRPEQNVLAVIPSTDNMISGSAMKPDDVIVSLSGKTIEILNTDAEGRLALADGLTYAKHHGASVLIDVATLTGGVVVALGTETTGAMTNHDPLYQQVRQAAEEAGEAIWQLPITEKDKKRVKNSQMADLNNSPGREGHAIMAGTFLGEFAEQTPWVHLDIAGTATTAQNSCFGPKGGTGVMVRTLVTFVERFSGNL</sequence>
<dbReference type="EC" id="3.4.11.1" evidence="1"/>
<dbReference type="EC" id="3.4.11.10" evidence="1"/>
<dbReference type="EMBL" id="CP000002">
    <property type="protein sequence ID" value="AAU24849.1"/>
    <property type="molecule type" value="Genomic_DNA"/>
</dbReference>
<dbReference type="EMBL" id="AE017333">
    <property type="protein sequence ID" value="AAU42218.1"/>
    <property type="molecule type" value="Genomic_DNA"/>
</dbReference>
<dbReference type="RefSeq" id="WP_003184916.1">
    <property type="nucleotide sequence ID" value="NC_006322.1"/>
</dbReference>
<dbReference type="SMR" id="Q65FE6"/>
<dbReference type="STRING" id="279010.BL05323"/>
<dbReference type="MEROPS" id="M17.010"/>
<dbReference type="KEGG" id="bld:BLi03387"/>
<dbReference type="KEGG" id="bli:BL05323"/>
<dbReference type="eggNOG" id="COG0260">
    <property type="taxonomic scope" value="Bacteria"/>
</dbReference>
<dbReference type="HOGENOM" id="CLU_013734_6_0_9"/>
<dbReference type="Proteomes" id="UP000000606">
    <property type="component" value="Chromosome"/>
</dbReference>
<dbReference type="GO" id="GO:0005737">
    <property type="term" value="C:cytoplasm"/>
    <property type="evidence" value="ECO:0007669"/>
    <property type="project" value="UniProtKB-SubCell"/>
</dbReference>
<dbReference type="GO" id="GO:0030145">
    <property type="term" value="F:manganese ion binding"/>
    <property type="evidence" value="ECO:0007669"/>
    <property type="project" value="UniProtKB-UniRule"/>
</dbReference>
<dbReference type="GO" id="GO:0070006">
    <property type="term" value="F:metalloaminopeptidase activity"/>
    <property type="evidence" value="ECO:0007669"/>
    <property type="project" value="InterPro"/>
</dbReference>
<dbReference type="GO" id="GO:0006508">
    <property type="term" value="P:proteolysis"/>
    <property type="evidence" value="ECO:0007669"/>
    <property type="project" value="UniProtKB-KW"/>
</dbReference>
<dbReference type="CDD" id="cd00433">
    <property type="entry name" value="Peptidase_M17"/>
    <property type="match status" value="1"/>
</dbReference>
<dbReference type="Gene3D" id="3.40.220.10">
    <property type="entry name" value="Leucine Aminopeptidase, subunit E, domain 1"/>
    <property type="match status" value="1"/>
</dbReference>
<dbReference type="Gene3D" id="3.40.630.10">
    <property type="entry name" value="Zn peptidases"/>
    <property type="match status" value="1"/>
</dbReference>
<dbReference type="HAMAP" id="MF_00181">
    <property type="entry name" value="Cytosol_peptidase_M17"/>
    <property type="match status" value="1"/>
</dbReference>
<dbReference type="InterPro" id="IPR011356">
    <property type="entry name" value="Leucine_aapep/pepB"/>
</dbReference>
<dbReference type="InterPro" id="IPR043472">
    <property type="entry name" value="Macro_dom-like"/>
</dbReference>
<dbReference type="InterPro" id="IPR000819">
    <property type="entry name" value="Peptidase_M17_C"/>
</dbReference>
<dbReference type="InterPro" id="IPR023042">
    <property type="entry name" value="Peptidase_M17_leu_NH2_pept"/>
</dbReference>
<dbReference type="InterPro" id="IPR008283">
    <property type="entry name" value="Peptidase_M17_N"/>
</dbReference>
<dbReference type="NCBIfam" id="NF002073">
    <property type="entry name" value="PRK00913.1-2"/>
    <property type="match status" value="1"/>
</dbReference>
<dbReference type="NCBIfam" id="NF002074">
    <property type="entry name" value="PRK00913.1-4"/>
    <property type="match status" value="1"/>
</dbReference>
<dbReference type="NCBIfam" id="NF002083">
    <property type="entry name" value="PRK00913.3-5"/>
    <property type="match status" value="1"/>
</dbReference>
<dbReference type="PANTHER" id="PTHR11963:SF23">
    <property type="entry name" value="CYTOSOL AMINOPEPTIDASE"/>
    <property type="match status" value="1"/>
</dbReference>
<dbReference type="PANTHER" id="PTHR11963">
    <property type="entry name" value="LEUCINE AMINOPEPTIDASE-RELATED"/>
    <property type="match status" value="1"/>
</dbReference>
<dbReference type="Pfam" id="PF00883">
    <property type="entry name" value="Peptidase_M17"/>
    <property type="match status" value="1"/>
</dbReference>
<dbReference type="Pfam" id="PF02789">
    <property type="entry name" value="Peptidase_M17_N"/>
    <property type="match status" value="1"/>
</dbReference>
<dbReference type="PRINTS" id="PR00481">
    <property type="entry name" value="LAMNOPPTDASE"/>
</dbReference>
<dbReference type="SUPFAM" id="SSF52949">
    <property type="entry name" value="Macro domain-like"/>
    <property type="match status" value="1"/>
</dbReference>
<dbReference type="SUPFAM" id="SSF53187">
    <property type="entry name" value="Zn-dependent exopeptidases"/>
    <property type="match status" value="1"/>
</dbReference>
<dbReference type="PROSITE" id="PS00631">
    <property type="entry name" value="CYTOSOL_AP"/>
    <property type="match status" value="1"/>
</dbReference>
<organism>
    <name type="scientific">Bacillus licheniformis (strain ATCC 14580 / DSM 13 / JCM 2505 / CCUG 7422 / NBRC 12200 / NCIMB 9375 / NCTC 10341 / NRRL NRS-1264 / Gibson 46)</name>
    <dbReference type="NCBI Taxonomy" id="279010"/>
    <lineage>
        <taxon>Bacteria</taxon>
        <taxon>Bacillati</taxon>
        <taxon>Bacillota</taxon>
        <taxon>Bacilli</taxon>
        <taxon>Bacillales</taxon>
        <taxon>Bacillaceae</taxon>
        <taxon>Bacillus</taxon>
    </lineage>
</organism>
<feature type="chain" id="PRO_1000019884" description="Probable cytosol aminopeptidase">
    <location>
        <begin position="1"/>
        <end position="496"/>
    </location>
</feature>
<feature type="active site" evidence="1">
    <location>
        <position position="273"/>
    </location>
</feature>
<feature type="active site" evidence="1">
    <location>
        <position position="347"/>
    </location>
</feature>
<feature type="binding site" evidence="1">
    <location>
        <position position="261"/>
    </location>
    <ligand>
        <name>Mn(2+)</name>
        <dbReference type="ChEBI" id="CHEBI:29035"/>
        <label>2</label>
    </ligand>
</feature>
<feature type="binding site" evidence="1">
    <location>
        <position position="266"/>
    </location>
    <ligand>
        <name>Mn(2+)</name>
        <dbReference type="ChEBI" id="CHEBI:29035"/>
        <label>1</label>
    </ligand>
</feature>
<feature type="binding site" evidence="1">
    <location>
        <position position="266"/>
    </location>
    <ligand>
        <name>Mn(2+)</name>
        <dbReference type="ChEBI" id="CHEBI:29035"/>
        <label>2</label>
    </ligand>
</feature>
<feature type="binding site" evidence="1">
    <location>
        <position position="284"/>
    </location>
    <ligand>
        <name>Mn(2+)</name>
        <dbReference type="ChEBI" id="CHEBI:29035"/>
        <label>2</label>
    </ligand>
</feature>
<feature type="binding site" evidence="1">
    <location>
        <position position="343"/>
    </location>
    <ligand>
        <name>Mn(2+)</name>
        <dbReference type="ChEBI" id="CHEBI:29035"/>
        <label>1</label>
    </ligand>
</feature>
<feature type="binding site" evidence="1">
    <location>
        <position position="345"/>
    </location>
    <ligand>
        <name>Mn(2+)</name>
        <dbReference type="ChEBI" id="CHEBI:29035"/>
        <label>1</label>
    </ligand>
</feature>
<feature type="binding site" evidence="1">
    <location>
        <position position="345"/>
    </location>
    <ligand>
        <name>Mn(2+)</name>
        <dbReference type="ChEBI" id="CHEBI:29035"/>
        <label>2</label>
    </ligand>
</feature>
<accession>Q65FE6</accession>
<accession>Q62QW1</accession>
<comment type="function">
    <text evidence="1">Presumably involved in the processing and regular turnover of intracellular proteins. Catalyzes the removal of unsubstituted N-terminal amino acids from various peptides.</text>
</comment>
<comment type="catalytic activity">
    <reaction evidence="1">
        <text>Release of an N-terminal amino acid, Xaa-|-Yaa-, in which Xaa is preferably Leu, but may be other amino acids including Pro although not Arg or Lys, and Yaa may be Pro. Amino acid amides and methyl esters are also readily hydrolyzed, but rates on arylamides are exceedingly low.</text>
        <dbReference type="EC" id="3.4.11.1"/>
    </reaction>
</comment>
<comment type="catalytic activity">
    <reaction evidence="1">
        <text>Release of an N-terminal amino acid, preferentially leucine, but not glutamic or aspartic acids.</text>
        <dbReference type="EC" id="3.4.11.10"/>
    </reaction>
</comment>
<comment type="cofactor">
    <cofactor evidence="1">
        <name>Mn(2+)</name>
        <dbReference type="ChEBI" id="CHEBI:29035"/>
    </cofactor>
    <text evidence="1">Binds 2 manganese ions per subunit.</text>
</comment>
<comment type="subcellular location">
    <subcellularLocation>
        <location evidence="1">Cytoplasm</location>
    </subcellularLocation>
</comment>
<comment type="similarity">
    <text evidence="1">Belongs to the peptidase M17 family.</text>
</comment>
<name>AMPA_BACLD</name>
<keyword id="KW-0031">Aminopeptidase</keyword>
<keyword id="KW-0963">Cytoplasm</keyword>
<keyword id="KW-0378">Hydrolase</keyword>
<keyword id="KW-0464">Manganese</keyword>
<keyword id="KW-0479">Metal-binding</keyword>
<keyword id="KW-0645">Protease</keyword>
<keyword id="KW-1185">Reference proteome</keyword>